<accession>Q04BB0</accession>
<evidence type="ECO:0000255" key="1">
    <source>
        <dbReference type="HAMAP-Rule" id="MF_01218"/>
    </source>
</evidence>
<keyword id="KW-0021">Allosteric enzyme</keyword>
<keyword id="KW-0328">Glycosyltransferase</keyword>
<keyword id="KW-0342">GTP-binding</keyword>
<keyword id="KW-0460">Magnesium</keyword>
<keyword id="KW-0547">Nucleotide-binding</keyword>
<keyword id="KW-0808">Transferase</keyword>
<gene>
    <name evidence="1" type="primary">upp</name>
    <name type="ordered locus">LBUL_0636</name>
</gene>
<reference key="1">
    <citation type="journal article" date="2006" name="Proc. Natl. Acad. Sci. U.S.A.">
        <title>Comparative genomics of the lactic acid bacteria.</title>
        <authorList>
            <person name="Makarova K.S."/>
            <person name="Slesarev A."/>
            <person name="Wolf Y.I."/>
            <person name="Sorokin A."/>
            <person name="Mirkin B."/>
            <person name="Koonin E.V."/>
            <person name="Pavlov A."/>
            <person name="Pavlova N."/>
            <person name="Karamychev V."/>
            <person name="Polouchine N."/>
            <person name="Shakhova V."/>
            <person name="Grigoriev I."/>
            <person name="Lou Y."/>
            <person name="Rohksar D."/>
            <person name="Lucas S."/>
            <person name="Huang K."/>
            <person name="Goodstein D.M."/>
            <person name="Hawkins T."/>
            <person name="Plengvidhya V."/>
            <person name="Welker D."/>
            <person name="Hughes J."/>
            <person name="Goh Y."/>
            <person name="Benson A."/>
            <person name="Baldwin K."/>
            <person name="Lee J.-H."/>
            <person name="Diaz-Muniz I."/>
            <person name="Dosti B."/>
            <person name="Smeianov V."/>
            <person name="Wechter W."/>
            <person name="Barabote R."/>
            <person name="Lorca G."/>
            <person name="Altermann E."/>
            <person name="Barrangou R."/>
            <person name="Ganesan B."/>
            <person name="Xie Y."/>
            <person name="Rawsthorne H."/>
            <person name="Tamir D."/>
            <person name="Parker C."/>
            <person name="Breidt F."/>
            <person name="Broadbent J.R."/>
            <person name="Hutkins R."/>
            <person name="O'Sullivan D."/>
            <person name="Steele J."/>
            <person name="Unlu G."/>
            <person name="Saier M.H. Jr."/>
            <person name="Klaenhammer T."/>
            <person name="Richardson P."/>
            <person name="Kozyavkin S."/>
            <person name="Weimer B.C."/>
            <person name="Mills D.A."/>
        </authorList>
    </citation>
    <scope>NUCLEOTIDE SEQUENCE [LARGE SCALE GENOMIC DNA]</scope>
    <source>
        <strain>ATCC BAA-365 / Lb-18</strain>
    </source>
</reference>
<proteinExistence type="inferred from homology"/>
<name>UPP_LACDB</name>
<organism>
    <name type="scientific">Lactobacillus delbrueckii subsp. bulgaricus (strain ATCC BAA-365 / Lb-18)</name>
    <dbReference type="NCBI Taxonomy" id="321956"/>
    <lineage>
        <taxon>Bacteria</taxon>
        <taxon>Bacillati</taxon>
        <taxon>Bacillota</taxon>
        <taxon>Bacilli</taxon>
        <taxon>Lactobacillales</taxon>
        <taxon>Lactobacillaceae</taxon>
        <taxon>Lactobacillus</taxon>
    </lineage>
</organism>
<feature type="chain" id="PRO_1000053731" description="Uracil phosphoribosyltransferase">
    <location>
        <begin position="1"/>
        <end position="209"/>
    </location>
</feature>
<feature type="binding site" evidence="1">
    <location>
        <position position="79"/>
    </location>
    <ligand>
        <name>5-phospho-alpha-D-ribose 1-diphosphate</name>
        <dbReference type="ChEBI" id="CHEBI:58017"/>
    </ligand>
</feature>
<feature type="binding site" evidence="1">
    <location>
        <position position="104"/>
    </location>
    <ligand>
        <name>5-phospho-alpha-D-ribose 1-diphosphate</name>
        <dbReference type="ChEBI" id="CHEBI:58017"/>
    </ligand>
</feature>
<feature type="binding site" evidence="1">
    <location>
        <begin position="131"/>
        <end position="139"/>
    </location>
    <ligand>
        <name>5-phospho-alpha-D-ribose 1-diphosphate</name>
        <dbReference type="ChEBI" id="CHEBI:58017"/>
    </ligand>
</feature>
<feature type="binding site" evidence="1">
    <location>
        <position position="194"/>
    </location>
    <ligand>
        <name>uracil</name>
        <dbReference type="ChEBI" id="CHEBI:17568"/>
    </ligand>
</feature>
<feature type="binding site" evidence="1">
    <location>
        <begin position="199"/>
        <end position="201"/>
    </location>
    <ligand>
        <name>uracil</name>
        <dbReference type="ChEBI" id="CHEBI:17568"/>
    </ligand>
</feature>
<feature type="binding site" evidence="1">
    <location>
        <position position="200"/>
    </location>
    <ligand>
        <name>5-phospho-alpha-D-ribose 1-diphosphate</name>
        <dbReference type="ChEBI" id="CHEBI:58017"/>
    </ligand>
</feature>
<dbReference type="EC" id="2.4.2.9" evidence="1"/>
<dbReference type="EMBL" id="CP000412">
    <property type="protein sequence ID" value="ABJ58262.1"/>
    <property type="molecule type" value="Genomic_DNA"/>
</dbReference>
<dbReference type="RefSeq" id="WP_002880062.1">
    <property type="nucleotide sequence ID" value="NC_008529.1"/>
</dbReference>
<dbReference type="SMR" id="Q04BB0"/>
<dbReference type="GeneID" id="69668683"/>
<dbReference type="KEGG" id="lbu:LBUL_0636"/>
<dbReference type="HOGENOM" id="CLU_067096_2_2_9"/>
<dbReference type="BioCyc" id="LDEL321956:LBUL_RS03025-MONOMER"/>
<dbReference type="UniPathway" id="UPA00574">
    <property type="reaction ID" value="UER00636"/>
</dbReference>
<dbReference type="GO" id="GO:0005525">
    <property type="term" value="F:GTP binding"/>
    <property type="evidence" value="ECO:0007669"/>
    <property type="project" value="UniProtKB-KW"/>
</dbReference>
<dbReference type="GO" id="GO:0000287">
    <property type="term" value="F:magnesium ion binding"/>
    <property type="evidence" value="ECO:0007669"/>
    <property type="project" value="UniProtKB-UniRule"/>
</dbReference>
<dbReference type="GO" id="GO:0004845">
    <property type="term" value="F:uracil phosphoribosyltransferase activity"/>
    <property type="evidence" value="ECO:0007669"/>
    <property type="project" value="UniProtKB-UniRule"/>
</dbReference>
<dbReference type="GO" id="GO:0044206">
    <property type="term" value="P:UMP salvage"/>
    <property type="evidence" value="ECO:0007669"/>
    <property type="project" value="UniProtKB-UniRule"/>
</dbReference>
<dbReference type="GO" id="GO:0006223">
    <property type="term" value="P:uracil salvage"/>
    <property type="evidence" value="ECO:0007669"/>
    <property type="project" value="InterPro"/>
</dbReference>
<dbReference type="CDD" id="cd06223">
    <property type="entry name" value="PRTases_typeI"/>
    <property type="match status" value="1"/>
</dbReference>
<dbReference type="FunFam" id="3.40.50.2020:FF:000003">
    <property type="entry name" value="Uracil phosphoribosyltransferase"/>
    <property type="match status" value="1"/>
</dbReference>
<dbReference type="Gene3D" id="3.40.50.2020">
    <property type="match status" value="1"/>
</dbReference>
<dbReference type="HAMAP" id="MF_01218_B">
    <property type="entry name" value="Upp_B"/>
    <property type="match status" value="1"/>
</dbReference>
<dbReference type="InterPro" id="IPR000836">
    <property type="entry name" value="PRibTrfase_dom"/>
</dbReference>
<dbReference type="InterPro" id="IPR029057">
    <property type="entry name" value="PRTase-like"/>
</dbReference>
<dbReference type="InterPro" id="IPR034332">
    <property type="entry name" value="Upp_B"/>
</dbReference>
<dbReference type="InterPro" id="IPR050054">
    <property type="entry name" value="UPRTase/APRTase"/>
</dbReference>
<dbReference type="InterPro" id="IPR005765">
    <property type="entry name" value="Ura_phspho_trans"/>
</dbReference>
<dbReference type="NCBIfam" id="NF001097">
    <property type="entry name" value="PRK00129.1"/>
    <property type="match status" value="1"/>
</dbReference>
<dbReference type="NCBIfam" id="TIGR01091">
    <property type="entry name" value="upp"/>
    <property type="match status" value="1"/>
</dbReference>
<dbReference type="PANTHER" id="PTHR32315">
    <property type="entry name" value="ADENINE PHOSPHORIBOSYLTRANSFERASE"/>
    <property type="match status" value="1"/>
</dbReference>
<dbReference type="PANTHER" id="PTHR32315:SF4">
    <property type="entry name" value="URACIL PHOSPHORIBOSYLTRANSFERASE, CHLOROPLASTIC"/>
    <property type="match status" value="1"/>
</dbReference>
<dbReference type="Pfam" id="PF14681">
    <property type="entry name" value="UPRTase"/>
    <property type="match status" value="1"/>
</dbReference>
<dbReference type="SUPFAM" id="SSF53271">
    <property type="entry name" value="PRTase-like"/>
    <property type="match status" value="1"/>
</dbReference>
<comment type="function">
    <text evidence="1">Catalyzes the conversion of uracil and 5-phospho-alpha-D-ribose 1-diphosphate (PRPP) to UMP and diphosphate.</text>
</comment>
<comment type="catalytic activity">
    <reaction evidence="1">
        <text>UMP + diphosphate = 5-phospho-alpha-D-ribose 1-diphosphate + uracil</text>
        <dbReference type="Rhea" id="RHEA:13017"/>
        <dbReference type="ChEBI" id="CHEBI:17568"/>
        <dbReference type="ChEBI" id="CHEBI:33019"/>
        <dbReference type="ChEBI" id="CHEBI:57865"/>
        <dbReference type="ChEBI" id="CHEBI:58017"/>
        <dbReference type="EC" id="2.4.2.9"/>
    </reaction>
</comment>
<comment type="cofactor">
    <cofactor evidence="1">
        <name>Mg(2+)</name>
        <dbReference type="ChEBI" id="CHEBI:18420"/>
    </cofactor>
    <text evidence="1">Binds 1 Mg(2+) ion per subunit. The magnesium is bound as Mg-PRPP.</text>
</comment>
<comment type="activity regulation">
    <text evidence="1">Allosterically activated by GTP.</text>
</comment>
<comment type="pathway">
    <text evidence="1">Pyrimidine metabolism; UMP biosynthesis via salvage pathway; UMP from uracil: step 1/1.</text>
</comment>
<comment type="similarity">
    <text evidence="1">Belongs to the UPRTase family.</text>
</comment>
<sequence>MGKFTVLNHPLIQHKLTIIRRKETGSNEFRRIVGEIAGLMTYEITRDLPLQDVEIETPMGKTVQKELAGKKLTIVPILRAGMGMVNGVLEMIPSAKVGVVGMYRDEETLKPVEYFFKVPKDVTERECLVVDPMLATGGSANLAIEALKKRGVTDIKLAVLVAAPEGVKAVQDEHPDVDIYAAALDDKLLPNGYIFPGLGDAGDRIFGTK</sequence>
<protein>
    <recommendedName>
        <fullName evidence="1">Uracil phosphoribosyltransferase</fullName>
        <ecNumber evidence="1">2.4.2.9</ecNumber>
    </recommendedName>
    <alternativeName>
        <fullName evidence="1">UMP pyrophosphorylase</fullName>
    </alternativeName>
    <alternativeName>
        <fullName evidence="1">UPRTase</fullName>
    </alternativeName>
</protein>